<accession>Q604K1</accession>
<evidence type="ECO:0000255" key="1">
    <source>
        <dbReference type="HAMAP-Rule" id="MF_00394"/>
    </source>
</evidence>
<reference key="1">
    <citation type="journal article" date="2004" name="PLoS Biol.">
        <title>Genomic insights into methanotrophy: the complete genome sequence of Methylococcus capsulatus (Bath).</title>
        <authorList>
            <person name="Ward N.L."/>
            <person name="Larsen O."/>
            <person name="Sakwa J."/>
            <person name="Bruseth L."/>
            <person name="Khouri H.M."/>
            <person name="Durkin A.S."/>
            <person name="Dimitrov G."/>
            <person name="Jiang L."/>
            <person name="Scanlan D."/>
            <person name="Kang K.H."/>
            <person name="Lewis M.R."/>
            <person name="Nelson K.E."/>
            <person name="Methe B.A."/>
            <person name="Wu M."/>
            <person name="Heidelberg J.F."/>
            <person name="Paulsen I.T."/>
            <person name="Fouts D.E."/>
            <person name="Ravel J."/>
            <person name="Tettelin H."/>
            <person name="Ren Q."/>
            <person name="Read T.D."/>
            <person name="DeBoy R.T."/>
            <person name="Seshadri R."/>
            <person name="Salzberg S.L."/>
            <person name="Jensen H.B."/>
            <person name="Birkeland N.K."/>
            <person name="Nelson W.C."/>
            <person name="Dodson R.J."/>
            <person name="Grindhaug S.H."/>
            <person name="Holt I.E."/>
            <person name="Eidhammer I."/>
            <person name="Jonasen I."/>
            <person name="Vanaken S."/>
            <person name="Utterback T.R."/>
            <person name="Feldblyum T.V."/>
            <person name="Fraser C.M."/>
            <person name="Lillehaug J.R."/>
            <person name="Eisen J.A."/>
        </authorList>
    </citation>
    <scope>NUCLEOTIDE SEQUENCE [LARGE SCALE GENOMIC DNA]</scope>
    <source>
        <strain>ATCC 33009 / NCIMB 11132 / Bath</strain>
    </source>
</reference>
<comment type="function">
    <text evidence="1">Catalyzes the reduction of the glycolytic intermediate dihydroxyacetone phosphate (DHAP) to sn-glycerol 3-phosphate (G3P), the key precursor for phospholipid synthesis.</text>
</comment>
<comment type="catalytic activity">
    <reaction evidence="1">
        <text>sn-glycerol 3-phosphate + NAD(+) = dihydroxyacetone phosphate + NADH + H(+)</text>
        <dbReference type="Rhea" id="RHEA:11092"/>
        <dbReference type="ChEBI" id="CHEBI:15378"/>
        <dbReference type="ChEBI" id="CHEBI:57540"/>
        <dbReference type="ChEBI" id="CHEBI:57597"/>
        <dbReference type="ChEBI" id="CHEBI:57642"/>
        <dbReference type="ChEBI" id="CHEBI:57945"/>
        <dbReference type="EC" id="1.1.1.94"/>
    </reaction>
    <physiologicalReaction direction="right-to-left" evidence="1">
        <dbReference type="Rhea" id="RHEA:11094"/>
    </physiologicalReaction>
</comment>
<comment type="catalytic activity">
    <reaction evidence="1">
        <text>sn-glycerol 3-phosphate + NADP(+) = dihydroxyacetone phosphate + NADPH + H(+)</text>
        <dbReference type="Rhea" id="RHEA:11096"/>
        <dbReference type="ChEBI" id="CHEBI:15378"/>
        <dbReference type="ChEBI" id="CHEBI:57597"/>
        <dbReference type="ChEBI" id="CHEBI:57642"/>
        <dbReference type="ChEBI" id="CHEBI:57783"/>
        <dbReference type="ChEBI" id="CHEBI:58349"/>
        <dbReference type="EC" id="1.1.1.94"/>
    </reaction>
    <physiologicalReaction direction="right-to-left" evidence="1">
        <dbReference type="Rhea" id="RHEA:11098"/>
    </physiologicalReaction>
</comment>
<comment type="pathway">
    <text evidence="1">Membrane lipid metabolism; glycerophospholipid metabolism.</text>
</comment>
<comment type="subcellular location">
    <subcellularLocation>
        <location evidence="1">Cytoplasm</location>
    </subcellularLocation>
</comment>
<comment type="similarity">
    <text evidence="1">Belongs to the NAD-dependent glycerol-3-phosphate dehydrogenase family.</text>
</comment>
<dbReference type="EC" id="1.1.1.94" evidence="1"/>
<dbReference type="EMBL" id="AE017282">
    <property type="protein sequence ID" value="AAU91408.1"/>
    <property type="molecule type" value="Genomic_DNA"/>
</dbReference>
<dbReference type="RefSeq" id="WP_010961759.1">
    <property type="nucleotide sequence ID" value="NC_002977.6"/>
</dbReference>
<dbReference type="SMR" id="Q604K1"/>
<dbReference type="STRING" id="243233.MCA2538"/>
<dbReference type="GeneID" id="88224732"/>
<dbReference type="KEGG" id="mca:MCA2538"/>
<dbReference type="eggNOG" id="COG0240">
    <property type="taxonomic scope" value="Bacteria"/>
</dbReference>
<dbReference type="HOGENOM" id="CLU_033449_0_2_6"/>
<dbReference type="UniPathway" id="UPA00940"/>
<dbReference type="Proteomes" id="UP000006821">
    <property type="component" value="Chromosome"/>
</dbReference>
<dbReference type="GO" id="GO:0005829">
    <property type="term" value="C:cytosol"/>
    <property type="evidence" value="ECO:0007669"/>
    <property type="project" value="TreeGrafter"/>
</dbReference>
<dbReference type="GO" id="GO:0047952">
    <property type="term" value="F:glycerol-3-phosphate dehydrogenase [NAD(P)+] activity"/>
    <property type="evidence" value="ECO:0007669"/>
    <property type="project" value="UniProtKB-UniRule"/>
</dbReference>
<dbReference type="GO" id="GO:0051287">
    <property type="term" value="F:NAD binding"/>
    <property type="evidence" value="ECO:0007669"/>
    <property type="project" value="InterPro"/>
</dbReference>
<dbReference type="GO" id="GO:0005975">
    <property type="term" value="P:carbohydrate metabolic process"/>
    <property type="evidence" value="ECO:0007669"/>
    <property type="project" value="InterPro"/>
</dbReference>
<dbReference type="GO" id="GO:0046167">
    <property type="term" value="P:glycerol-3-phosphate biosynthetic process"/>
    <property type="evidence" value="ECO:0007669"/>
    <property type="project" value="UniProtKB-UniRule"/>
</dbReference>
<dbReference type="GO" id="GO:0046168">
    <property type="term" value="P:glycerol-3-phosphate catabolic process"/>
    <property type="evidence" value="ECO:0007669"/>
    <property type="project" value="InterPro"/>
</dbReference>
<dbReference type="GO" id="GO:0046474">
    <property type="term" value="P:glycerophospholipid biosynthetic process"/>
    <property type="evidence" value="ECO:0007669"/>
    <property type="project" value="TreeGrafter"/>
</dbReference>
<dbReference type="FunFam" id="1.10.1040.10:FF:000001">
    <property type="entry name" value="Glycerol-3-phosphate dehydrogenase [NAD(P)+]"/>
    <property type="match status" value="1"/>
</dbReference>
<dbReference type="FunFam" id="3.40.50.720:FF:000019">
    <property type="entry name" value="Glycerol-3-phosphate dehydrogenase [NAD(P)+]"/>
    <property type="match status" value="1"/>
</dbReference>
<dbReference type="Gene3D" id="1.10.1040.10">
    <property type="entry name" value="N-(1-d-carboxylethyl)-l-norvaline Dehydrogenase, domain 2"/>
    <property type="match status" value="1"/>
</dbReference>
<dbReference type="Gene3D" id="3.40.50.720">
    <property type="entry name" value="NAD(P)-binding Rossmann-like Domain"/>
    <property type="match status" value="1"/>
</dbReference>
<dbReference type="HAMAP" id="MF_00394">
    <property type="entry name" value="NAD_Glyc3P_dehydrog"/>
    <property type="match status" value="1"/>
</dbReference>
<dbReference type="InterPro" id="IPR008927">
    <property type="entry name" value="6-PGluconate_DH-like_C_sf"/>
</dbReference>
<dbReference type="InterPro" id="IPR013328">
    <property type="entry name" value="6PGD_dom2"/>
</dbReference>
<dbReference type="InterPro" id="IPR006168">
    <property type="entry name" value="G3P_DH_NAD-dep"/>
</dbReference>
<dbReference type="InterPro" id="IPR006109">
    <property type="entry name" value="G3P_DH_NAD-dep_C"/>
</dbReference>
<dbReference type="InterPro" id="IPR011128">
    <property type="entry name" value="G3P_DH_NAD-dep_N"/>
</dbReference>
<dbReference type="InterPro" id="IPR036291">
    <property type="entry name" value="NAD(P)-bd_dom_sf"/>
</dbReference>
<dbReference type="NCBIfam" id="NF000940">
    <property type="entry name" value="PRK00094.1-2"/>
    <property type="match status" value="1"/>
</dbReference>
<dbReference type="NCBIfam" id="NF000942">
    <property type="entry name" value="PRK00094.1-4"/>
    <property type="match status" value="1"/>
</dbReference>
<dbReference type="PANTHER" id="PTHR11728">
    <property type="entry name" value="GLYCEROL-3-PHOSPHATE DEHYDROGENASE"/>
    <property type="match status" value="1"/>
</dbReference>
<dbReference type="PANTHER" id="PTHR11728:SF1">
    <property type="entry name" value="GLYCEROL-3-PHOSPHATE DEHYDROGENASE [NAD(+)] 2, CHLOROPLASTIC"/>
    <property type="match status" value="1"/>
</dbReference>
<dbReference type="Pfam" id="PF07479">
    <property type="entry name" value="NAD_Gly3P_dh_C"/>
    <property type="match status" value="1"/>
</dbReference>
<dbReference type="Pfam" id="PF01210">
    <property type="entry name" value="NAD_Gly3P_dh_N"/>
    <property type="match status" value="1"/>
</dbReference>
<dbReference type="PIRSF" id="PIRSF000114">
    <property type="entry name" value="Glycerol-3-P_dh"/>
    <property type="match status" value="1"/>
</dbReference>
<dbReference type="PRINTS" id="PR00077">
    <property type="entry name" value="GPDHDRGNASE"/>
</dbReference>
<dbReference type="SUPFAM" id="SSF48179">
    <property type="entry name" value="6-phosphogluconate dehydrogenase C-terminal domain-like"/>
    <property type="match status" value="1"/>
</dbReference>
<dbReference type="SUPFAM" id="SSF51735">
    <property type="entry name" value="NAD(P)-binding Rossmann-fold domains"/>
    <property type="match status" value="1"/>
</dbReference>
<dbReference type="PROSITE" id="PS00957">
    <property type="entry name" value="NAD_G3PDH"/>
    <property type="match status" value="1"/>
</dbReference>
<gene>
    <name evidence="1" type="primary">gpsA</name>
    <name type="ordered locus">MCA2538</name>
</gene>
<feature type="chain" id="PRO_0000137988" description="Glycerol-3-phosphate dehydrogenase [NAD(P)+]">
    <location>
        <begin position="1"/>
        <end position="335"/>
    </location>
</feature>
<feature type="active site" description="Proton acceptor" evidence="1">
    <location>
        <position position="192"/>
    </location>
</feature>
<feature type="binding site" evidence="1">
    <location>
        <position position="12"/>
    </location>
    <ligand>
        <name>NADPH</name>
        <dbReference type="ChEBI" id="CHEBI:57783"/>
    </ligand>
</feature>
<feature type="binding site" evidence="1">
    <location>
        <position position="13"/>
    </location>
    <ligand>
        <name>NADPH</name>
        <dbReference type="ChEBI" id="CHEBI:57783"/>
    </ligand>
</feature>
<feature type="binding site" evidence="1">
    <location>
        <position position="33"/>
    </location>
    <ligand>
        <name>NADPH</name>
        <dbReference type="ChEBI" id="CHEBI:57783"/>
    </ligand>
</feature>
<feature type="binding site" evidence="1">
    <location>
        <position position="34"/>
    </location>
    <ligand>
        <name>NADPH</name>
        <dbReference type="ChEBI" id="CHEBI:57783"/>
    </ligand>
</feature>
<feature type="binding site" evidence="1">
    <location>
        <position position="108"/>
    </location>
    <ligand>
        <name>NADPH</name>
        <dbReference type="ChEBI" id="CHEBI:57783"/>
    </ligand>
</feature>
<feature type="binding site" evidence="1">
    <location>
        <position position="108"/>
    </location>
    <ligand>
        <name>sn-glycerol 3-phosphate</name>
        <dbReference type="ChEBI" id="CHEBI:57597"/>
    </ligand>
</feature>
<feature type="binding site" evidence="1">
    <location>
        <position position="137"/>
    </location>
    <ligand>
        <name>sn-glycerol 3-phosphate</name>
        <dbReference type="ChEBI" id="CHEBI:57597"/>
    </ligand>
</feature>
<feature type="binding site" evidence="1">
    <location>
        <position position="139"/>
    </location>
    <ligand>
        <name>sn-glycerol 3-phosphate</name>
        <dbReference type="ChEBI" id="CHEBI:57597"/>
    </ligand>
</feature>
<feature type="binding site" evidence="1">
    <location>
        <position position="141"/>
    </location>
    <ligand>
        <name>NADPH</name>
        <dbReference type="ChEBI" id="CHEBI:57783"/>
    </ligand>
</feature>
<feature type="binding site" evidence="1">
    <location>
        <position position="192"/>
    </location>
    <ligand>
        <name>sn-glycerol 3-phosphate</name>
        <dbReference type="ChEBI" id="CHEBI:57597"/>
    </ligand>
</feature>
<feature type="binding site" evidence="1">
    <location>
        <position position="245"/>
    </location>
    <ligand>
        <name>sn-glycerol 3-phosphate</name>
        <dbReference type="ChEBI" id="CHEBI:57597"/>
    </ligand>
</feature>
<feature type="binding site" evidence="1">
    <location>
        <position position="255"/>
    </location>
    <ligand>
        <name>sn-glycerol 3-phosphate</name>
        <dbReference type="ChEBI" id="CHEBI:57597"/>
    </ligand>
</feature>
<feature type="binding site" evidence="1">
    <location>
        <position position="256"/>
    </location>
    <ligand>
        <name>NADPH</name>
        <dbReference type="ChEBI" id="CHEBI:57783"/>
    </ligand>
</feature>
<feature type="binding site" evidence="1">
    <location>
        <position position="256"/>
    </location>
    <ligand>
        <name>sn-glycerol 3-phosphate</name>
        <dbReference type="ChEBI" id="CHEBI:57597"/>
    </ligand>
</feature>
<feature type="binding site" evidence="1">
    <location>
        <position position="257"/>
    </location>
    <ligand>
        <name>sn-glycerol 3-phosphate</name>
        <dbReference type="ChEBI" id="CHEBI:57597"/>
    </ligand>
</feature>
<feature type="binding site" evidence="1">
    <location>
        <position position="282"/>
    </location>
    <ligand>
        <name>NADPH</name>
        <dbReference type="ChEBI" id="CHEBI:57783"/>
    </ligand>
</feature>
<sequence length="335" mass="35647">MRHCISVLGAGSWGTALALLIARNGVPTLLWSHRREHAEAMAAERRNAHYLPHATFPDTLSVTPDLAEAAATASDAVLVAVPSHAFRATLDLCAPHLQPEAGLMWATKGLDRTRGCLLHETAREILGPDRALAVLSGPTFAAEVVAELPSAITVGASSEAFGAKIVSWLHNAYFRAYTTDDLIGAQLGGACKNVLAIAAGISDGLGFGANARAALITRGLAEMMRLSLALGARTETLMGLAGVGDLVLTATDNQSRNRRFGLGVGKGRPREEIHAEIGQEIEGILAARLIHELAGRKGVDMPITAQTYRVLYEGLPPEEAVRNLLLRDPKPEWDR</sequence>
<keyword id="KW-0963">Cytoplasm</keyword>
<keyword id="KW-0444">Lipid biosynthesis</keyword>
<keyword id="KW-0443">Lipid metabolism</keyword>
<keyword id="KW-0520">NAD</keyword>
<keyword id="KW-0521">NADP</keyword>
<keyword id="KW-0547">Nucleotide-binding</keyword>
<keyword id="KW-0560">Oxidoreductase</keyword>
<keyword id="KW-0594">Phospholipid biosynthesis</keyword>
<keyword id="KW-1208">Phospholipid metabolism</keyword>
<keyword id="KW-1185">Reference proteome</keyword>
<proteinExistence type="inferred from homology"/>
<name>GPDA_METCA</name>
<protein>
    <recommendedName>
        <fullName evidence="1">Glycerol-3-phosphate dehydrogenase [NAD(P)+]</fullName>
        <ecNumber evidence="1">1.1.1.94</ecNumber>
    </recommendedName>
    <alternativeName>
        <fullName evidence="1">NAD(P)(+)-dependent glycerol-3-phosphate dehydrogenase</fullName>
    </alternativeName>
    <alternativeName>
        <fullName evidence="1">NAD(P)H-dependent dihydroxyacetone-phosphate reductase</fullName>
    </alternativeName>
</protein>
<organism>
    <name type="scientific">Methylococcus capsulatus (strain ATCC 33009 / NCIMB 11132 / Bath)</name>
    <dbReference type="NCBI Taxonomy" id="243233"/>
    <lineage>
        <taxon>Bacteria</taxon>
        <taxon>Pseudomonadati</taxon>
        <taxon>Pseudomonadota</taxon>
        <taxon>Gammaproteobacteria</taxon>
        <taxon>Methylococcales</taxon>
        <taxon>Methylococcaceae</taxon>
        <taxon>Methylococcus</taxon>
    </lineage>
</organism>